<gene>
    <name evidence="1" type="primary">bioB</name>
    <name type="ordered locus">xcc-b100_0416</name>
</gene>
<keyword id="KW-0001">2Fe-2S</keyword>
<keyword id="KW-0004">4Fe-4S</keyword>
<keyword id="KW-0093">Biotin biosynthesis</keyword>
<keyword id="KW-0408">Iron</keyword>
<keyword id="KW-0411">Iron-sulfur</keyword>
<keyword id="KW-0479">Metal-binding</keyword>
<keyword id="KW-0949">S-adenosyl-L-methionine</keyword>
<keyword id="KW-0808">Transferase</keyword>
<feature type="chain" id="PRO_0000381709" description="Biotin synthase">
    <location>
        <begin position="1"/>
        <end position="344"/>
    </location>
</feature>
<feature type="domain" description="Radical SAM core" evidence="2">
    <location>
        <begin position="40"/>
        <end position="267"/>
    </location>
</feature>
<feature type="binding site" evidence="1">
    <location>
        <position position="55"/>
    </location>
    <ligand>
        <name>[4Fe-4S] cluster</name>
        <dbReference type="ChEBI" id="CHEBI:49883"/>
        <note>4Fe-4S-S-AdoMet</note>
    </ligand>
</feature>
<feature type="binding site" evidence="1">
    <location>
        <position position="59"/>
    </location>
    <ligand>
        <name>[4Fe-4S] cluster</name>
        <dbReference type="ChEBI" id="CHEBI:49883"/>
        <note>4Fe-4S-S-AdoMet</note>
    </ligand>
</feature>
<feature type="binding site" evidence="1">
    <location>
        <position position="62"/>
    </location>
    <ligand>
        <name>[4Fe-4S] cluster</name>
        <dbReference type="ChEBI" id="CHEBI:49883"/>
        <note>4Fe-4S-S-AdoMet</note>
    </ligand>
</feature>
<feature type="binding site" evidence="1">
    <location>
        <position position="99"/>
    </location>
    <ligand>
        <name>[2Fe-2S] cluster</name>
        <dbReference type="ChEBI" id="CHEBI:190135"/>
    </ligand>
</feature>
<feature type="binding site" evidence="1">
    <location>
        <position position="130"/>
    </location>
    <ligand>
        <name>[2Fe-2S] cluster</name>
        <dbReference type="ChEBI" id="CHEBI:190135"/>
    </ligand>
</feature>
<feature type="binding site" evidence="1">
    <location>
        <position position="190"/>
    </location>
    <ligand>
        <name>[2Fe-2S] cluster</name>
        <dbReference type="ChEBI" id="CHEBI:190135"/>
    </ligand>
</feature>
<feature type="binding site" evidence="1">
    <location>
        <position position="262"/>
    </location>
    <ligand>
        <name>[2Fe-2S] cluster</name>
        <dbReference type="ChEBI" id="CHEBI:190135"/>
    </ligand>
</feature>
<name>BIOB_XANCB</name>
<proteinExistence type="inferred from homology"/>
<sequence length="344" mass="37516">MSVVVRHDWDRKELHALFALPFPELLHRAASVHRAHFDPAEVQVSTLLSVKTGGCPEDCAYCPQAQRYDTGVSAQKLMDTEDVVAKARQAKAAGASRFCMGAAWRSPKDRDIPKVAAMIREVKAMGLETCATLGMLDAGQARALKDAGLDYYNHNLDTAPDYYDSIIHTRQYQDRLNTLEHVRDVGLKTCCGGIVGMGETREHRVGLLHALATLPAHPDSVPINQLVQVPGTPLHGTEPLDAFEFVRMIAVARIAMPKSMVRLSAGREAMSDELQALCFLAGANSIFYGEKLLTTGNPDTERDQGLFQRLGLRPMQITVDAAEHDHPGTVHADITCGAACEHAA</sequence>
<evidence type="ECO:0000255" key="1">
    <source>
        <dbReference type="HAMAP-Rule" id="MF_01694"/>
    </source>
</evidence>
<evidence type="ECO:0000255" key="2">
    <source>
        <dbReference type="PROSITE-ProRule" id="PRU01266"/>
    </source>
</evidence>
<dbReference type="EC" id="2.8.1.6" evidence="1"/>
<dbReference type="EMBL" id="AM920689">
    <property type="protein sequence ID" value="CAP49747.1"/>
    <property type="molecule type" value="Genomic_DNA"/>
</dbReference>
<dbReference type="SMR" id="B0RMR2"/>
<dbReference type="KEGG" id="xca:xcc-b100_0416"/>
<dbReference type="HOGENOM" id="CLU_033172_1_2_6"/>
<dbReference type="UniPathway" id="UPA00078">
    <property type="reaction ID" value="UER00162"/>
</dbReference>
<dbReference type="Proteomes" id="UP000001188">
    <property type="component" value="Chromosome"/>
</dbReference>
<dbReference type="GO" id="GO:0051537">
    <property type="term" value="F:2 iron, 2 sulfur cluster binding"/>
    <property type="evidence" value="ECO:0007669"/>
    <property type="project" value="UniProtKB-KW"/>
</dbReference>
<dbReference type="GO" id="GO:0051539">
    <property type="term" value="F:4 iron, 4 sulfur cluster binding"/>
    <property type="evidence" value="ECO:0007669"/>
    <property type="project" value="UniProtKB-KW"/>
</dbReference>
<dbReference type="GO" id="GO:0004076">
    <property type="term" value="F:biotin synthase activity"/>
    <property type="evidence" value="ECO:0007669"/>
    <property type="project" value="UniProtKB-UniRule"/>
</dbReference>
<dbReference type="GO" id="GO:0005506">
    <property type="term" value="F:iron ion binding"/>
    <property type="evidence" value="ECO:0007669"/>
    <property type="project" value="UniProtKB-UniRule"/>
</dbReference>
<dbReference type="GO" id="GO:0009102">
    <property type="term" value="P:biotin biosynthetic process"/>
    <property type="evidence" value="ECO:0007669"/>
    <property type="project" value="UniProtKB-UniRule"/>
</dbReference>
<dbReference type="CDD" id="cd01335">
    <property type="entry name" value="Radical_SAM"/>
    <property type="match status" value="1"/>
</dbReference>
<dbReference type="FunFam" id="3.20.20.70:FF:000011">
    <property type="entry name" value="Biotin synthase"/>
    <property type="match status" value="1"/>
</dbReference>
<dbReference type="Gene3D" id="3.20.20.70">
    <property type="entry name" value="Aldolase class I"/>
    <property type="match status" value="1"/>
</dbReference>
<dbReference type="HAMAP" id="MF_01694">
    <property type="entry name" value="BioB"/>
    <property type="match status" value="1"/>
</dbReference>
<dbReference type="InterPro" id="IPR013785">
    <property type="entry name" value="Aldolase_TIM"/>
</dbReference>
<dbReference type="InterPro" id="IPR010722">
    <property type="entry name" value="BATS_dom"/>
</dbReference>
<dbReference type="InterPro" id="IPR002684">
    <property type="entry name" value="Biotin_synth/BioAB"/>
</dbReference>
<dbReference type="InterPro" id="IPR024177">
    <property type="entry name" value="Biotin_synthase"/>
</dbReference>
<dbReference type="InterPro" id="IPR006638">
    <property type="entry name" value="Elp3/MiaA/NifB-like_rSAM"/>
</dbReference>
<dbReference type="InterPro" id="IPR007197">
    <property type="entry name" value="rSAM"/>
</dbReference>
<dbReference type="NCBIfam" id="TIGR00433">
    <property type="entry name" value="bioB"/>
    <property type="match status" value="1"/>
</dbReference>
<dbReference type="PANTHER" id="PTHR22976">
    <property type="entry name" value="BIOTIN SYNTHASE"/>
    <property type="match status" value="1"/>
</dbReference>
<dbReference type="PANTHER" id="PTHR22976:SF2">
    <property type="entry name" value="BIOTIN SYNTHASE, MITOCHONDRIAL"/>
    <property type="match status" value="1"/>
</dbReference>
<dbReference type="Pfam" id="PF06968">
    <property type="entry name" value="BATS"/>
    <property type="match status" value="1"/>
</dbReference>
<dbReference type="Pfam" id="PF04055">
    <property type="entry name" value="Radical_SAM"/>
    <property type="match status" value="1"/>
</dbReference>
<dbReference type="PIRSF" id="PIRSF001619">
    <property type="entry name" value="Biotin_synth"/>
    <property type="match status" value="1"/>
</dbReference>
<dbReference type="SFLD" id="SFLDF00272">
    <property type="entry name" value="biotin_synthase"/>
    <property type="match status" value="1"/>
</dbReference>
<dbReference type="SFLD" id="SFLDG01278">
    <property type="entry name" value="biotin_synthase_like"/>
    <property type="match status" value="1"/>
</dbReference>
<dbReference type="SMART" id="SM00876">
    <property type="entry name" value="BATS"/>
    <property type="match status" value="1"/>
</dbReference>
<dbReference type="SMART" id="SM00729">
    <property type="entry name" value="Elp3"/>
    <property type="match status" value="1"/>
</dbReference>
<dbReference type="SUPFAM" id="SSF102114">
    <property type="entry name" value="Radical SAM enzymes"/>
    <property type="match status" value="1"/>
</dbReference>
<dbReference type="PROSITE" id="PS51918">
    <property type="entry name" value="RADICAL_SAM"/>
    <property type="match status" value="1"/>
</dbReference>
<accession>B0RMR2</accession>
<comment type="function">
    <text evidence="1">Catalyzes the conversion of dethiobiotin (DTB) to biotin by the insertion of a sulfur atom into dethiobiotin via a radical-based mechanism.</text>
</comment>
<comment type="catalytic activity">
    <reaction evidence="1">
        <text>(4R,5S)-dethiobiotin + (sulfur carrier)-SH + 2 reduced [2Fe-2S]-[ferredoxin] + 2 S-adenosyl-L-methionine = (sulfur carrier)-H + biotin + 2 5'-deoxyadenosine + 2 L-methionine + 2 oxidized [2Fe-2S]-[ferredoxin]</text>
        <dbReference type="Rhea" id="RHEA:22060"/>
        <dbReference type="Rhea" id="RHEA-COMP:10000"/>
        <dbReference type="Rhea" id="RHEA-COMP:10001"/>
        <dbReference type="Rhea" id="RHEA-COMP:14737"/>
        <dbReference type="Rhea" id="RHEA-COMP:14739"/>
        <dbReference type="ChEBI" id="CHEBI:17319"/>
        <dbReference type="ChEBI" id="CHEBI:29917"/>
        <dbReference type="ChEBI" id="CHEBI:33737"/>
        <dbReference type="ChEBI" id="CHEBI:33738"/>
        <dbReference type="ChEBI" id="CHEBI:57586"/>
        <dbReference type="ChEBI" id="CHEBI:57844"/>
        <dbReference type="ChEBI" id="CHEBI:59789"/>
        <dbReference type="ChEBI" id="CHEBI:64428"/>
        <dbReference type="ChEBI" id="CHEBI:149473"/>
        <dbReference type="EC" id="2.8.1.6"/>
    </reaction>
</comment>
<comment type="cofactor">
    <cofactor evidence="1">
        <name>[4Fe-4S] cluster</name>
        <dbReference type="ChEBI" id="CHEBI:49883"/>
    </cofactor>
    <text evidence="1">Binds 1 [4Fe-4S] cluster. The cluster is coordinated with 3 cysteines and an exchangeable S-adenosyl-L-methionine.</text>
</comment>
<comment type="cofactor">
    <cofactor evidence="1">
        <name>[2Fe-2S] cluster</name>
        <dbReference type="ChEBI" id="CHEBI:190135"/>
    </cofactor>
    <text evidence="1">Binds 1 [2Fe-2S] cluster. The cluster is coordinated with 3 cysteines and 1 arginine.</text>
</comment>
<comment type="pathway">
    <text evidence="1">Cofactor biosynthesis; biotin biosynthesis; biotin from 7,8-diaminononanoate: step 2/2.</text>
</comment>
<comment type="subunit">
    <text evidence="1">Homodimer.</text>
</comment>
<comment type="similarity">
    <text evidence="1">Belongs to the radical SAM superfamily. Biotin synthase family.</text>
</comment>
<reference key="1">
    <citation type="journal article" date="2008" name="J. Biotechnol.">
        <title>The genome of Xanthomonas campestris pv. campestris B100 and its use for the reconstruction of metabolic pathways involved in xanthan biosynthesis.</title>
        <authorList>
            <person name="Vorhoelter F.-J."/>
            <person name="Schneiker S."/>
            <person name="Goesmann A."/>
            <person name="Krause L."/>
            <person name="Bekel T."/>
            <person name="Kaiser O."/>
            <person name="Linke B."/>
            <person name="Patschkowski T."/>
            <person name="Rueckert C."/>
            <person name="Schmid J."/>
            <person name="Sidhu V.K."/>
            <person name="Sieber V."/>
            <person name="Tauch A."/>
            <person name="Watt S.A."/>
            <person name="Weisshaar B."/>
            <person name="Becker A."/>
            <person name="Niehaus K."/>
            <person name="Puehler A."/>
        </authorList>
    </citation>
    <scope>NUCLEOTIDE SEQUENCE [LARGE SCALE GENOMIC DNA]</scope>
    <source>
        <strain>B100</strain>
    </source>
</reference>
<protein>
    <recommendedName>
        <fullName evidence="1">Biotin synthase</fullName>
        <ecNumber evidence="1">2.8.1.6</ecNumber>
    </recommendedName>
</protein>
<organism>
    <name type="scientific">Xanthomonas campestris pv. campestris (strain B100)</name>
    <dbReference type="NCBI Taxonomy" id="509169"/>
    <lineage>
        <taxon>Bacteria</taxon>
        <taxon>Pseudomonadati</taxon>
        <taxon>Pseudomonadota</taxon>
        <taxon>Gammaproteobacteria</taxon>
        <taxon>Lysobacterales</taxon>
        <taxon>Lysobacteraceae</taxon>
        <taxon>Xanthomonas</taxon>
    </lineage>
</organism>